<dbReference type="EMBL" id="S83198">
    <property type="protein sequence ID" value="AAB46823.1"/>
    <property type="status" value="ALT_FRAME"/>
    <property type="molecule type" value="mRNA"/>
</dbReference>
<dbReference type="EMBL" id="AC106884">
    <property type="status" value="NOT_ANNOTATED_CDS"/>
    <property type="molecule type" value="Genomic_DNA"/>
</dbReference>
<dbReference type="EMBL" id="CH471057">
    <property type="protein sequence ID" value="EAX05620.1"/>
    <property type="molecule type" value="Genomic_DNA"/>
</dbReference>
<dbReference type="CCDS" id="CCDS43235.1"/>
<dbReference type="RefSeq" id="NP_067048.4">
    <property type="nucleotide sequence ID" value="NM_021225.5"/>
</dbReference>
<dbReference type="BioGRID" id="121831">
    <property type="interactions" value="12"/>
</dbReference>
<dbReference type="FunCoup" id="Q99935">
    <property type="interactions" value="55"/>
</dbReference>
<dbReference type="IntAct" id="Q99935">
    <property type="interactions" value="5"/>
</dbReference>
<dbReference type="STRING" id="9606.ENSP00000382485"/>
<dbReference type="GlyCosmos" id="Q99935">
    <property type="glycosylation" value="1 site, No reported glycans"/>
</dbReference>
<dbReference type="GlyGen" id="Q99935">
    <property type="glycosylation" value="1 site"/>
</dbReference>
<dbReference type="BioMuta" id="OPRPN"/>
<dbReference type="DMDM" id="290457653"/>
<dbReference type="MassIVE" id="Q99935"/>
<dbReference type="PaxDb" id="9606-ENSP00000382485"/>
<dbReference type="PeptideAtlas" id="Q99935"/>
<dbReference type="ProteomicsDB" id="78530"/>
<dbReference type="Pumba" id="Q99935"/>
<dbReference type="Antibodypedia" id="24327">
    <property type="antibodies" value="24 antibodies from 10 providers"/>
</dbReference>
<dbReference type="DNASU" id="58503"/>
<dbReference type="Ensembl" id="ENST00000399575.7">
    <property type="protein sequence ID" value="ENSP00000382485.2"/>
    <property type="gene ID" value="ENSG00000171199.11"/>
</dbReference>
<dbReference type="GeneID" id="58503"/>
<dbReference type="KEGG" id="hsa:58503"/>
<dbReference type="MANE-Select" id="ENST00000399575.7">
    <property type="protein sequence ID" value="ENSP00000382485.2"/>
    <property type="RefSeq nucleotide sequence ID" value="NM_021225.5"/>
    <property type="RefSeq protein sequence ID" value="NP_067048.4"/>
</dbReference>
<dbReference type="UCSC" id="uc003hfi.4">
    <property type="organism name" value="human"/>
</dbReference>
<dbReference type="AGR" id="HGNC:17279"/>
<dbReference type="CTD" id="58503"/>
<dbReference type="DisGeNET" id="58503"/>
<dbReference type="GeneCards" id="OPRPN"/>
<dbReference type="HGNC" id="HGNC:17279">
    <property type="gene designation" value="OPRPN"/>
</dbReference>
<dbReference type="HPA" id="ENSG00000171199">
    <property type="expression patterns" value="Tissue enriched (salivary)"/>
</dbReference>
<dbReference type="MIM" id="608936">
    <property type="type" value="gene"/>
</dbReference>
<dbReference type="neXtProt" id="NX_Q99935"/>
<dbReference type="OpenTargets" id="ENSG00000171199"/>
<dbReference type="PharmGKB" id="PA33803"/>
<dbReference type="VEuPathDB" id="HostDB:ENSG00000171199"/>
<dbReference type="eggNOG" id="ENOG502RWXN">
    <property type="taxonomic scope" value="Eukaryota"/>
</dbReference>
<dbReference type="GeneTree" id="ENSGT00730000111944"/>
<dbReference type="HOGENOM" id="CLU_1124221_0_0_1"/>
<dbReference type="InParanoid" id="Q99935"/>
<dbReference type="OMA" id="NPKPQIN"/>
<dbReference type="OrthoDB" id="9539608at2759"/>
<dbReference type="PAN-GO" id="Q99935">
    <property type="GO annotations" value="2 GO annotations based on evolutionary models"/>
</dbReference>
<dbReference type="PhylomeDB" id="Q99935"/>
<dbReference type="TreeFam" id="TF342130"/>
<dbReference type="PathwayCommons" id="Q99935"/>
<dbReference type="SignaLink" id="Q99935"/>
<dbReference type="BioGRID-ORCS" id="58503">
    <property type="hits" value="14 hits in 1134 CRISPR screens"/>
</dbReference>
<dbReference type="GenomeRNAi" id="58503"/>
<dbReference type="Pharos" id="Q99935">
    <property type="development level" value="Tdark"/>
</dbReference>
<dbReference type="PRO" id="PR:Q99935"/>
<dbReference type="Proteomes" id="UP000005640">
    <property type="component" value="Chromosome 4"/>
</dbReference>
<dbReference type="RNAct" id="Q99935">
    <property type="molecule type" value="protein"/>
</dbReference>
<dbReference type="Bgee" id="ENSG00000171199">
    <property type="expression patterns" value="Expressed in buccal mucosa cell and 44 other cell types or tissues"/>
</dbReference>
<dbReference type="GO" id="GO:0005576">
    <property type="term" value="C:extracellular region"/>
    <property type="evidence" value="ECO:0000314"/>
    <property type="project" value="UniProtKB"/>
</dbReference>
<dbReference type="GO" id="GO:0005615">
    <property type="term" value="C:extracellular space"/>
    <property type="evidence" value="ECO:0007005"/>
    <property type="project" value="UniProtKB"/>
</dbReference>
<dbReference type="GO" id="GO:0004866">
    <property type="term" value="F:endopeptidase inhibitor activity"/>
    <property type="evidence" value="ECO:0000314"/>
    <property type="project" value="UniProtKB"/>
</dbReference>
<dbReference type="GO" id="GO:0030414">
    <property type="term" value="F:peptidase inhibitor activity"/>
    <property type="evidence" value="ECO:0000314"/>
    <property type="project" value="UniProtKB"/>
</dbReference>
<dbReference type="GO" id="GO:0051930">
    <property type="term" value="P:regulation of sensory perception of pain"/>
    <property type="evidence" value="ECO:0000314"/>
    <property type="project" value="UniProtKB"/>
</dbReference>
<dbReference type="InterPro" id="IPR026288">
    <property type="entry name" value="SMR-like"/>
</dbReference>
<dbReference type="PANTHER" id="PTHR14179:SF8">
    <property type="entry name" value="OPIORPHIN PREPROPEPTIDE"/>
    <property type="match status" value="1"/>
</dbReference>
<dbReference type="PANTHER" id="PTHR14179">
    <property type="entry name" value="SMR1-RELATED"/>
    <property type="match status" value="1"/>
</dbReference>
<dbReference type="Pfam" id="PF15621">
    <property type="entry name" value="PROL5-SMR"/>
    <property type="match status" value="1"/>
</dbReference>
<proteinExistence type="evidence at protein level"/>
<evidence type="ECO:0000255" key="1"/>
<evidence type="ECO:0000256" key="2">
    <source>
        <dbReference type="SAM" id="MobiDB-lite"/>
    </source>
</evidence>
<evidence type="ECO:0000269" key="3">
    <source>
    </source>
</evidence>
<evidence type="ECO:0000269" key="4">
    <source>
    </source>
</evidence>
<evidence type="ECO:0000305" key="5"/>
<evidence type="ECO:0000312" key="6">
    <source>
        <dbReference type="HGNC" id="HGNC:17279"/>
    </source>
</evidence>
<gene>
    <name evidence="6" type="primary">OPRPN</name>
    <name type="synonym">BPLP</name>
    <name type="synonym">PROL1</name>
</gene>
<keyword id="KW-0903">Direct protein sequencing</keyword>
<keyword id="KW-0325">Glycoprotein</keyword>
<keyword id="KW-0646">Protease inhibitor</keyword>
<keyword id="KW-1267">Proteomics identification</keyword>
<keyword id="KW-0873">Pyrrolidone carboxylic acid</keyword>
<keyword id="KW-1185">Reference proteome</keyword>
<keyword id="KW-0964">Secreted</keyword>
<keyword id="KW-0732">Signal</keyword>
<accession>Q99935</accession>
<accession>A8MZ07</accession>
<accession>P85047</accession>
<protein>
    <recommendedName>
        <fullName evidence="6">Opiorphin prepropeptide</fullName>
    </recommendedName>
    <alternativeName>
        <fullName>Basic proline-rich lacrimal protein</fullName>
    </alternativeName>
    <alternativeName>
        <fullName>Proline-rich protein 1</fullName>
        <shortName>PRL1</shortName>
    </alternativeName>
    <component>
        <recommendedName>
            <fullName>Opiorphin</fullName>
        </recommendedName>
    </component>
</protein>
<sequence>MKLTFFLGLLALISCFTPSESQRFSRRPYLPGQLPPPPLYRPRWVPPSPPPPYDSRLNSPLSLPFVPGRVPPSSFSRFSQAVILSQLFPLESIRQPRLFPGYPNLHFPLRPYYVGPIRILKPPFPPIPFFLAIYLPISNPEPQINITTADTTITTNPPTTATATTSTSTKPTMTISSSTVPISSTPEPATSISAATPAASTENTTQILANRPHTVLLNATVQVTTSNQTILSSPAFKSFWQKLFAIFG</sequence>
<feature type="signal peptide" evidence="3 4">
    <location>
        <begin position="1"/>
        <end position="21"/>
    </location>
</feature>
<feature type="chain" id="PRO_0000022111" description="Opiorphin prepropeptide">
    <location>
        <begin position="22"/>
        <end position="248"/>
    </location>
</feature>
<feature type="peptide" id="PRO_0000271169" description="Opiorphin">
    <location>
        <begin position="22"/>
        <end position="26"/>
    </location>
</feature>
<feature type="region of interest" description="Disordered" evidence="2">
    <location>
        <begin position="150"/>
        <end position="198"/>
    </location>
</feature>
<feature type="modified residue" description="Pyrrolidone carboxylic acid" evidence="3 4">
    <location>
        <position position="22"/>
    </location>
</feature>
<feature type="glycosylation site" description="N-linked (GlcNAc...) asparagine" evidence="1">
    <location>
        <position position="218"/>
    </location>
</feature>
<feature type="sequence conflict" description="In Ref. 1; AAB46823." evidence="5" ref="1">
    <original>S</original>
    <variation>G</variation>
    <location>
        <position position="166"/>
    </location>
</feature>
<organism>
    <name type="scientific">Homo sapiens</name>
    <name type="common">Human</name>
    <dbReference type="NCBI Taxonomy" id="9606"/>
    <lineage>
        <taxon>Eukaryota</taxon>
        <taxon>Metazoa</taxon>
        <taxon>Chordata</taxon>
        <taxon>Craniata</taxon>
        <taxon>Vertebrata</taxon>
        <taxon>Euteleostomi</taxon>
        <taxon>Mammalia</taxon>
        <taxon>Eutheria</taxon>
        <taxon>Euarchontoglires</taxon>
        <taxon>Primates</taxon>
        <taxon>Haplorrhini</taxon>
        <taxon>Catarrhini</taxon>
        <taxon>Hominidae</taxon>
        <taxon>Homo</taxon>
    </lineage>
</organism>
<name>PROL1_HUMAN</name>
<comment type="function">
    <text evidence="3">Opiorphin is an endogenous inhibitor of neprilysin and aminopeptidase N. Inhibits the breakdown of substance P, Mca-BK2 and Met-enkephalin by neprilysin in vitro with IC(50) values of 29 uM, 33 uM and 33 uM respectively. Inhibits the breakdown of Ala-pNA by aminopeptidase N in vitro with an IC(50) of 65 uM. Has a potent analgesic effect when administered to rats by intravenous injection.</text>
</comment>
<comment type="subcellular location">
    <subcellularLocation>
        <location evidence="3">Secreted</location>
    </subcellularLocation>
</comment>
<comment type="tissue specificity">
    <text>Abundantly expressed in lacrimal gland where it found in the secretory endpieces. Also expressed at modest levels in the submandibular gland.</text>
</comment>
<comment type="mass spectrometry">
    <molecule>Opiorphin</molecule>
</comment>
<comment type="similarity">
    <text evidence="5">Belongs to the PROL1/PROL3 family.</text>
</comment>
<comment type="sequence caution" evidence="5">
    <conflict type="frameshift">
        <sequence resource="EMBL-CDS" id="AAB46823"/>
    </conflict>
</comment>
<reference key="1">
    <citation type="journal article" date="1996" name="Curr. Eye Res.">
        <title>cDNA cloning of an abundant human lacrimal gland mRNA encoding a novel tear protein.</title>
        <authorList>
            <person name="Dickinson D.P."/>
            <person name="Thiesse M."/>
        </authorList>
    </citation>
    <scope>NUCLEOTIDE SEQUENCE [MRNA]</scope>
    <source>
        <tissue>Lacrimal gland</tissue>
    </source>
</reference>
<reference key="2">
    <citation type="journal article" date="2005" name="Nature">
        <title>Generation and annotation of the DNA sequences of human chromosomes 2 and 4.</title>
        <authorList>
            <person name="Hillier L.W."/>
            <person name="Graves T.A."/>
            <person name="Fulton R.S."/>
            <person name="Fulton L.A."/>
            <person name="Pepin K.H."/>
            <person name="Minx P."/>
            <person name="Wagner-McPherson C."/>
            <person name="Layman D."/>
            <person name="Wylie K."/>
            <person name="Sekhon M."/>
            <person name="Becker M.C."/>
            <person name="Fewell G.A."/>
            <person name="Delehaunty K.D."/>
            <person name="Miner T.L."/>
            <person name="Nash W.E."/>
            <person name="Kremitzki C."/>
            <person name="Oddy L."/>
            <person name="Du H."/>
            <person name="Sun H."/>
            <person name="Bradshaw-Cordum H."/>
            <person name="Ali J."/>
            <person name="Carter J."/>
            <person name="Cordes M."/>
            <person name="Harris A."/>
            <person name="Isak A."/>
            <person name="van Brunt A."/>
            <person name="Nguyen C."/>
            <person name="Du F."/>
            <person name="Courtney L."/>
            <person name="Kalicki J."/>
            <person name="Ozersky P."/>
            <person name="Abbott S."/>
            <person name="Armstrong J."/>
            <person name="Belter E.A."/>
            <person name="Caruso L."/>
            <person name="Cedroni M."/>
            <person name="Cotton M."/>
            <person name="Davidson T."/>
            <person name="Desai A."/>
            <person name="Elliott G."/>
            <person name="Erb T."/>
            <person name="Fronick C."/>
            <person name="Gaige T."/>
            <person name="Haakenson W."/>
            <person name="Haglund K."/>
            <person name="Holmes A."/>
            <person name="Harkins R."/>
            <person name="Kim K."/>
            <person name="Kruchowski S.S."/>
            <person name="Strong C.M."/>
            <person name="Grewal N."/>
            <person name="Goyea E."/>
            <person name="Hou S."/>
            <person name="Levy A."/>
            <person name="Martinka S."/>
            <person name="Mead K."/>
            <person name="McLellan M.D."/>
            <person name="Meyer R."/>
            <person name="Randall-Maher J."/>
            <person name="Tomlinson C."/>
            <person name="Dauphin-Kohlberg S."/>
            <person name="Kozlowicz-Reilly A."/>
            <person name="Shah N."/>
            <person name="Swearengen-Shahid S."/>
            <person name="Snider J."/>
            <person name="Strong J.T."/>
            <person name="Thompson J."/>
            <person name="Yoakum M."/>
            <person name="Leonard S."/>
            <person name="Pearman C."/>
            <person name="Trani L."/>
            <person name="Radionenko M."/>
            <person name="Waligorski J.E."/>
            <person name="Wang C."/>
            <person name="Rock S.M."/>
            <person name="Tin-Wollam A.-M."/>
            <person name="Maupin R."/>
            <person name="Latreille P."/>
            <person name="Wendl M.C."/>
            <person name="Yang S.-P."/>
            <person name="Pohl C."/>
            <person name="Wallis J.W."/>
            <person name="Spieth J."/>
            <person name="Bieri T.A."/>
            <person name="Berkowicz N."/>
            <person name="Nelson J.O."/>
            <person name="Osborne J."/>
            <person name="Ding L."/>
            <person name="Meyer R."/>
            <person name="Sabo A."/>
            <person name="Shotland Y."/>
            <person name="Sinha P."/>
            <person name="Wohldmann P.E."/>
            <person name="Cook L.L."/>
            <person name="Hickenbotham M.T."/>
            <person name="Eldred J."/>
            <person name="Williams D."/>
            <person name="Jones T.A."/>
            <person name="She X."/>
            <person name="Ciccarelli F.D."/>
            <person name="Izaurralde E."/>
            <person name="Taylor J."/>
            <person name="Schmutz J."/>
            <person name="Myers R.M."/>
            <person name="Cox D.R."/>
            <person name="Huang X."/>
            <person name="McPherson J.D."/>
            <person name="Mardis E.R."/>
            <person name="Clifton S.W."/>
            <person name="Warren W.C."/>
            <person name="Chinwalla A.T."/>
            <person name="Eddy S.R."/>
            <person name="Marra M.A."/>
            <person name="Ovcharenko I."/>
            <person name="Furey T.S."/>
            <person name="Miller W."/>
            <person name="Eichler E.E."/>
            <person name="Bork P."/>
            <person name="Suyama M."/>
            <person name="Torrents D."/>
            <person name="Waterston R.H."/>
            <person name="Wilson R.K."/>
        </authorList>
    </citation>
    <scope>NUCLEOTIDE SEQUENCE [LARGE SCALE GENOMIC DNA]</scope>
</reference>
<reference key="3">
    <citation type="submission" date="2005-07" db="EMBL/GenBank/DDBJ databases">
        <authorList>
            <person name="Mural R.J."/>
            <person name="Istrail S."/>
            <person name="Sutton G.G."/>
            <person name="Florea L."/>
            <person name="Halpern A.L."/>
            <person name="Mobarry C.M."/>
            <person name="Lippert R."/>
            <person name="Walenz B."/>
            <person name="Shatkay H."/>
            <person name="Dew I."/>
            <person name="Miller J.R."/>
            <person name="Flanigan M.J."/>
            <person name="Edwards N.J."/>
            <person name="Bolanos R."/>
            <person name="Fasulo D."/>
            <person name="Halldorsson B.V."/>
            <person name="Hannenhalli S."/>
            <person name="Turner R."/>
            <person name="Yooseph S."/>
            <person name="Lu F."/>
            <person name="Nusskern D.R."/>
            <person name="Shue B.C."/>
            <person name="Zheng X.H."/>
            <person name="Zhong F."/>
            <person name="Delcher A.L."/>
            <person name="Huson D.H."/>
            <person name="Kravitz S.A."/>
            <person name="Mouchard L."/>
            <person name="Reinert K."/>
            <person name="Remington K.A."/>
            <person name="Clark A.G."/>
            <person name="Waterman M.S."/>
            <person name="Eichler E.E."/>
            <person name="Adams M.D."/>
            <person name="Hunkapiller M.W."/>
            <person name="Myers E.W."/>
            <person name="Venter J.C."/>
        </authorList>
    </citation>
    <scope>NUCLEOTIDE SEQUENCE [LARGE SCALE GENOMIC DNA]</scope>
</reference>
<reference key="4">
    <citation type="journal article" date="2015" name="J. Proteome Res.">
        <title>Human basal tear peptidome characterization by CID, HCD, and ETD followed by in silico and in vitro analyses for antimicrobial peptide identification.</title>
        <authorList>
            <person name="Azkargorta M."/>
            <person name="Soria J."/>
            <person name="Ojeda C."/>
            <person name="Guzman F."/>
            <person name="Acera A."/>
            <person name="Iloro I."/>
            <person name="Suarez T."/>
            <person name="Elortza F."/>
        </authorList>
    </citation>
    <scope>PROTEIN SEQUENCE OF 22-43</scope>
    <scope>IDENTIFICATION BY MASS SPECTROMETRY</scope>
    <scope>PYROGLUTAMATE FORMATION AT GLN-22</scope>
    <source>
        <tissue>Tear</tissue>
    </source>
</reference>
<reference key="5">
    <citation type="journal article" date="2006" name="Proc. Natl. Acad. Sci. U.S.A.">
        <title>Human opiorphin, a natural antinociceptive modulator of opioid-dependent pathways.</title>
        <authorList>
            <person name="Wisner A."/>
            <person name="Dufour E."/>
            <person name="Messaoudi M."/>
            <person name="Nejdi A."/>
            <person name="Marcel A."/>
            <person name="Ungeheuer M.-N."/>
            <person name="Rougeot C."/>
        </authorList>
    </citation>
    <scope>PROTEIN SEQUENCE OF 22-26</scope>
    <scope>FUNCTION</scope>
    <scope>SUBCELLULAR LOCATION</scope>
    <scope>PYROGLUTAMATE FORMATION AT GLN-22</scope>
    <scope>MASS SPECTROMETRY</scope>
    <source>
        <tissue>Saliva</tissue>
    </source>
</reference>